<feature type="chain" id="PRO_1000117261" description="Peptide chain release factor 2">
    <location>
        <begin position="1"/>
        <end position="365"/>
    </location>
</feature>
<feature type="modified residue" description="N5-methylglutamine" evidence="1">
    <location>
        <position position="252"/>
    </location>
</feature>
<accession>B7N7D5</accession>
<dbReference type="EMBL" id="CU928163">
    <property type="protein sequence ID" value="CAR14397.2"/>
    <property type="molecule type" value="Genomic_DNA"/>
</dbReference>
<dbReference type="RefSeq" id="WP_001701073.1">
    <property type="nucleotide sequence ID" value="NC_011751.1"/>
</dbReference>
<dbReference type="RefSeq" id="YP_002413916.1">
    <property type="nucleotide sequence ID" value="NC_011751.1"/>
</dbReference>
<dbReference type="SMR" id="B7N7D5"/>
<dbReference type="STRING" id="585056.ECUMN_3233"/>
<dbReference type="GeneID" id="93779111"/>
<dbReference type="KEGG" id="eum:ECUMN_3233"/>
<dbReference type="PATRIC" id="fig|585056.7.peg.3408"/>
<dbReference type="HOGENOM" id="CLU_220733_1_0_6"/>
<dbReference type="Proteomes" id="UP000007097">
    <property type="component" value="Chromosome"/>
</dbReference>
<dbReference type="GO" id="GO:0005737">
    <property type="term" value="C:cytoplasm"/>
    <property type="evidence" value="ECO:0007669"/>
    <property type="project" value="UniProtKB-SubCell"/>
</dbReference>
<dbReference type="GO" id="GO:0016149">
    <property type="term" value="F:translation release factor activity, codon specific"/>
    <property type="evidence" value="ECO:0007669"/>
    <property type="project" value="UniProtKB-UniRule"/>
</dbReference>
<dbReference type="FunFam" id="1.20.58.410:FF:000001">
    <property type="entry name" value="Peptide chain release factor 2"/>
    <property type="match status" value="1"/>
</dbReference>
<dbReference type="FunFam" id="3.30.160.20:FF:000010">
    <property type="entry name" value="Peptide chain release factor 2"/>
    <property type="match status" value="1"/>
</dbReference>
<dbReference type="Gene3D" id="3.30.160.20">
    <property type="match status" value="1"/>
</dbReference>
<dbReference type="Gene3D" id="3.30.70.1660">
    <property type="match status" value="1"/>
</dbReference>
<dbReference type="Gene3D" id="1.20.58.410">
    <property type="entry name" value="Release factor"/>
    <property type="match status" value="1"/>
</dbReference>
<dbReference type="HAMAP" id="MF_00094">
    <property type="entry name" value="Rel_fac_2"/>
    <property type="match status" value="1"/>
</dbReference>
<dbReference type="InterPro" id="IPR005139">
    <property type="entry name" value="PCRF"/>
</dbReference>
<dbReference type="InterPro" id="IPR000352">
    <property type="entry name" value="Pep_chain_release_fac_I"/>
</dbReference>
<dbReference type="InterPro" id="IPR045853">
    <property type="entry name" value="Pep_chain_release_fac_I_sf"/>
</dbReference>
<dbReference type="InterPro" id="IPR004374">
    <property type="entry name" value="PrfB"/>
</dbReference>
<dbReference type="NCBIfam" id="TIGR00020">
    <property type="entry name" value="prfB"/>
    <property type="match status" value="1"/>
</dbReference>
<dbReference type="PANTHER" id="PTHR43116:SF3">
    <property type="entry name" value="CLASS I PEPTIDE CHAIN RELEASE FACTOR"/>
    <property type="match status" value="1"/>
</dbReference>
<dbReference type="PANTHER" id="PTHR43116">
    <property type="entry name" value="PEPTIDE CHAIN RELEASE FACTOR 2"/>
    <property type="match status" value="1"/>
</dbReference>
<dbReference type="Pfam" id="PF03462">
    <property type="entry name" value="PCRF"/>
    <property type="match status" value="1"/>
</dbReference>
<dbReference type="Pfam" id="PF00472">
    <property type="entry name" value="RF-1"/>
    <property type="match status" value="1"/>
</dbReference>
<dbReference type="SMART" id="SM00937">
    <property type="entry name" value="PCRF"/>
    <property type="match status" value="1"/>
</dbReference>
<dbReference type="SUPFAM" id="SSF75620">
    <property type="entry name" value="Release factor"/>
    <property type="match status" value="1"/>
</dbReference>
<dbReference type="PROSITE" id="PS00745">
    <property type="entry name" value="RF_PROK_I"/>
    <property type="match status" value="1"/>
</dbReference>
<sequence length="365" mass="41221">MFEINPVNNRIQDLTERSDVLRGYLDYDAKKERLEEVNAELEQPDVWNEPERAQALGKERSSLEAVVDTLDQMKQGLEDVSGLLELAVEADDEETFNEAVAELDALEEKLAQLEFRRMFSGEYDSADCYLDIQAGSGGTEAQDWASMLERMYLRWAESRGFKTEIIEESEGEVAGIKSVTIKISGDYAYGWLRTETGVHRLVRKSPFDSGGRRHTSFSSAFVYPEVDDDIDIEINPADLRIDVYRASGAGGQHVNRTESAVRITHIPTGIVTQCQNDRSQHKNKDQAMKQMKAKLYELEMQKKNAEKQAMEDNKSDIGWGSQIRSYVLDDSRIKDLRTGVETRNTQAVLDGSLDQFIEASLKAGL</sequence>
<reference key="1">
    <citation type="journal article" date="2009" name="PLoS Genet.">
        <title>Organised genome dynamics in the Escherichia coli species results in highly diverse adaptive paths.</title>
        <authorList>
            <person name="Touchon M."/>
            <person name="Hoede C."/>
            <person name="Tenaillon O."/>
            <person name="Barbe V."/>
            <person name="Baeriswyl S."/>
            <person name="Bidet P."/>
            <person name="Bingen E."/>
            <person name="Bonacorsi S."/>
            <person name="Bouchier C."/>
            <person name="Bouvet O."/>
            <person name="Calteau A."/>
            <person name="Chiapello H."/>
            <person name="Clermont O."/>
            <person name="Cruveiller S."/>
            <person name="Danchin A."/>
            <person name="Diard M."/>
            <person name="Dossat C."/>
            <person name="Karoui M.E."/>
            <person name="Frapy E."/>
            <person name="Garry L."/>
            <person name="Ghigo J.M."/>
            <person name="Gilles A.M."/>
            <person name="Johnson J."/>
            <person name="Le Bouguenec C."/>
            <person name="Lescat M."/>
            <person name="Mangenot S."/>
            <person name="Martinez-Jehanne V."/>
            <person name="Matic I."/>
            <person name="Nassif X."/>
            <person name="Oztas S."/>
            <person name="Petit M.A."/>
            <person name="Pichon C."/>
            <person name="Rouy Z."/>
            <person name="Ruf C.S."/>
            <person name="Schneider D."/>
            <person name="Tourret J."/>
            <person name="Vacherie B."/>
            <person name="Vallenet D."/>
            <person name="Medigue C."/>
            <person name="Rocha E.P.C."/>
            <person name="Denamur E."/>
        </authorList>
    </citation>
    <scope>NUCLEOTIDE SEQUENCE [LARGE SCALE GENOMIC DNA]</scope>
    <source>
        <strain>UMN026 / ExPEC</strain>
    </source>
</reference>
<protein>
    <recommendedName>
        <fullName evidence="1">Peptide chain release factor 2</fullName>
        <shortName evidence="1">RF-2</shortName>
    </recommendedName>
</protein>
<keyword id="KW-0963">Cytoplasm</keyword>
<keyword id="KW-0488">Methylation</keyword>
<keyword id="KW-0648">Protein biosynthesis</keyword>
<evidence type="ECO:0000255" key="1">
    <source>
        <dbReference type="HAMAP-Rule" id="MF_00094"/>
    </source>
</evidence>
<gene>
    <name evidence="1" type="primary">prfB</name>
    <name type="ordered locus">ECUMN_3233</name>
</gene>
<proteinExistence type="inferred from homology"/>
<comment type="function">
    <text evidence="1">Peptide chain release factor 2 directs the termination of translation in response to the peptide chain termination codons UGA and UAA.</text>
</comment>
<comment type="subcellular location">
    <subcellularLocation>
        <location evidence="1">Cytoplasm</location>
    </subcellularLocation>
</comment>
<comment type="PTM">
    <text evidence="1">Methylated by PrmC. Methylation increases the termination efficiency of RF2.</text>
</comment>
<comment type="similarity">
    <text evidence="1">Belongs to the prokaryotic/mitochondrial release factor family.</text>
</comment>
<name>RF2_ECOLU</name>
<organism>
    <name type="scientific">Escherichia coli O17:K52:H18 (strain UMN026 / ExPEC)</name>
    <dbReference type="NCBI Taxonomy" id="585056"/>
    <lineage>
        <taxon>Bacteria</taxon>
        <taxon>Pseudomonadati</taxon>
        <taxon>Pseudomonadota</taxon>
        <taxon>Gammaproteobacteria</taxon>
        <taxon>Enterobacterales</taxon>
        <taxon>Enterobacteriaceae</taxon>
        <taxon>Escherichia</taxon>
    </lineage>
</organism>